<protein>
    <recommendedName>
        <fullName>Putative sodium/calcium exchanger 7</fullName>
    </recommendedName>
    <alternativeName>
        <fullName>Na(+)/Ca(2+)-exchange protein 7</fullName>
    </alternativeName>
</protein>
<accession>P34322</accession>
<name>NCX7_CAEEL</name>
<gene>
    <name type="primary">ncx-7</name>
    <name type="ORF">C07A9.11</name>
</gene>
<proteinExistence type="inferred from homology"/>
<evidence type="ECO:0000255" key="1"/>
<evidence type="ECO:0000305" key="2"/>
<dbReference type="EMBL" id="Z29094">
    <property type="protein sequence ID" value="CAA82341.3"/>
    <property type="molecule type" value="Genomic_DNA"/>
</dbReference>
<dbReference type="PIR" id="S40707">
    <property type="entry name" value="S40707"/>
</dbReference>
<dbReference type="RefSeq" id="NP_499147.3">
    <property type="nucleotide sequence ID" value="NM_066746.8"/>
</dbReference>
<dbReference type="FunCoup" id="P34322">
    <property type="interactions" value="175"/>
</dbReference>
<dbReference type="STRING" id="6239.C07A9.11.1"/>
<dbReference type="PaxDb" id="6239-C07A9.11"/>
<dbReference type="PeptideAtlas" id="P34322"/>
<dbReference type="EnsemblMetazoa" id="C07A9.11.1">
    <property type="protein sequence ID" value="C07A9.11.1"/>
    <property type="gene ID" value="WBGene00003572"/>
</dbReference>
<dbReference type="GeneID" id="176370"/>
<dbReference type="KEGG" id="cel:CELE_C07A9.11"/>
<dbReference type="UCSC" id="C07A9.11">
    <property type="organism name" value="c. elegans"/>
</dbReference>
<dbReference type="AGR" id="WB:WBGene00003572"/>
<dbReference type="CTD" id="176370"/>
<dbReference type="WormBase" id="C07A9.11">
    <property type="protein sequence ID" value="CE39219"/>
    <property type="gene ID" value="WBGene00003572"/>
    <property type="gene designation" value="ncx-7"/>
</dbReference>
<dbReference type="eggNOG" id="KOG2399">
    <property type="taxonomic scope" value="Eukaryota"/>
</dbReference>
<dbReference type="GeneTree" id="ENSGT00970000196614"/>
<dbReference type="HOGENOM" id="CLU_004979_3_1_1"/>
<dbReference type="InParanoid" id="P34322"/>
<dbReference type="OMA" id="AANYFCS"/>
<dbReference type="OrthoDB" id="407410at2759"/>
<dbReference type="PhylomeDB" id="P34322"/>
<dbReference type="Reactome" id="R-CEL-425561">
    <property type="pathway name" value="Sodium/Calcium exchangers"/>
</dbReference>
<dbReference type="Reactome" id="R-CEL-8949215">
    <property type="pathway name" value="Mitochondrial calcium ion transport"/>
</dbReference>
<dbReference type="PRO" id="PR:P34322"/>
<dbReference type="Proteomes" id="UP000001940">
    <property type="component" value="Chromosome III"/>
</dbReference>
<dbReference type="Bgee" id="WBGene00003572">
    <property type="expression patterns" value="Expressed in larva and 2 other cell types or tissues"/>
</dbReference>
<dbReference type="GO" id="GO:0016020">
    <property type="term" value="C:membrane"/>
    <property type="evidence" value="ECO:0000318"/>
    <property type="project" value="GO_Central"/>
</dbReference>
<dbReference type="GO" id="GO:0005432">
    <property type="term" value="F:calcium:sodium antiporter activity"/>
    <property type="evidence" value="ECO:0000318"/>
    <property type="project" value="GO_Central"/>
</dbReference>
<dbReference type="GO" id="GO:0006874">
    <property type="term" value="P:intracellular calcium ion homeostasis"/>
    <property type="evidence" value="ECO:0000318"/>
    <property type="project" value="GO_Central"/>
</dbReference>
<dbReference type="GO" id="GO:0006812">
    <property type="term" value="P:monoatomic cation transport"/>
    <property type="evidence" value="ECO:0000318"/>
    <property type="project" value="GO_Central"/>
</dbReference>
<dbReference type="Gene3D" id="1.20.1420.30">
    <property type="entry name" value="NCX, central ion-binding region"/>
    <property type="match status" value="2"/>
</dbReference>
<dbReference type="InterPro" id="IPR051359">
    <property type="entry name" value="CaCA_antiporter"/>
</dbReference>
<dbReference type="InterPro" id="IPR004837">
    <property type="entry name" value="NaCa_Exmemb"/>
</dbReference>
<dbReference type="InterPro" id="IPR044880">
    <property type="entry name" value="NCX_ion-bd_dom_sf"/>
</dbReference>
<dbReference type="PANTHER" id="PTHR12266:SF0">
    <property type="entry name" value="MITOCHONDRIAL SODIUM_CALCIUM EXCHANGER PROTEIN"/>
    <property type="match status" value="1"/>
</dbReference>
<dbReference type="PANTHER" id="PTHR12266">
    <property type="entry name" value="NA+/CA2+ K+ INDEPENDENT EXCHANGER"/>
    <property type="match status" value="1"/>
</dbReference>
<dbReference type="Pfam" id="PF01699">
    <property type="entry name" value="Na_Ca_ex"/>
    <property type="match status" value="2"/>
</dbReference>
<keyword id="KW-0050">Antiport</keyword>
<keyword id="KW-0106">Calcium</keyword>
<keyword id="KW-0109">Calcium transport</keyword>
<keyword id="KW-0406">Ion transport</keyword>
<keyword id="KW-0472">Membrane</keyword>
<keyword id="KW-1185">Reference proteome</keyword>
<keyword id="KW-0732">Signal</keyword>
<keyword id="KW-0915">Sodium</keyword>
<keyword id="KW-0739">Sodium transport</keyword>
<keyword id="KW-0812">Transmembrane</keyword>
<keyword id="KW-1133">Transmembrane helix</keyword>
<keyword id="KW-0813">Transport</keyword>
<sequence length="672" mass="74824">MAQPSILFSLTLIFLISIKSCDAKYRTSFFKTPNCSIYPDAEKCELNKTWTQEQVCDYVNCNDNACEGGGYLLWTQYVECASSTFSRVILIIVGVIYMLVLFIMVSSAADDFFSPSISSIVAHLRISESVAGVTFMAFGNGAPDVFGSIASVLSSPTPKADLALGELFGGGLFVTTMVVSTIILTSPFDVEVFSTIRDLLFYLVALSFLAFCFVFYNRVTLWMPLTFLGLYLLYVITVIGAQAVHNRKRKALQKQNSTKSRKSIKSLRSRKSIHSVAPMPVIPEIEVHDQEAPFPEISVVTGAIDKLKEHMAEKAQTTRRYTKRASFMVNGDGNLNGLHPYATHNHLGISRRESELSDEDEEFVVIHGHVFQGHEARSRAASLVPEPMQIKSWRSKDILKDLAEHLDPRPEAEDWEEMNIFSKVMAYINVVPNLLFKLTIPLNEMSWSKPLTLLHAFTCPAFLLFSIQFFLETPFSGSPGLWVYGLAVSIVLAILIMVFTELSVQPKYYKEIYSYSGFIMSIAWIYLISSEVVNVVTMLGVVSRVSHEVLGLTILAWSNSIGDLIADVSVVKQGYPRMAMAAAIGGPLFNLLMGFGLPFTIAKLQGKYISMTINPTYRLLILFLAISLLATLIGIPVQKFRLQRPHAAVLISIYIAFIVFVILSETGVLVWN</sequence>
<organism>
    <name type="scientific">Caenorhabditis elegans</name>
    <dbReference type="NCBI Taxonomy" id="6239"/>
    <lineage>
        <taxon>Eukaryota</taxon>
        <taxon>Metazoa</taxon>
        <taxon>Ecdysozoa</taxon>
        <taxon>Nematoda</taxon>
        <taxon>Chromadorea</taxon>
        <taxon>Rhabditida</taxon>
        <taxon>Rhabditina</taxon>
        <taxon>Rhabditomorpha</taxon>
        <taxon>Rhabditoidea</taxon>
        <taxon>Rhabditidae</taxon>
        <taxon>Peloderinae</taxon>
        <taxon>Caenorhabditis</taxon>
    </lineage>
</organism>
<reference key="1">
    <citation type="journal article" date="1994" name="Nature">
        <title>2.2 Mb of contiguous nucleotide sequence from chromosome III of C. elegans.</title>
        <authorList>
            <person name="Wilson R."/>
            <person name="Ainscough R."/>
            <person name="Anderson K."/>
            <person name="Baynes C."/>
            <person name="Berks M."/>
            <person name="Bonfield J."/>
            <person name="Burton J."/>
            <person name="Connell M."/>
            <person name="Copsey T."/>
            <person name="Cooper J."/>
            <person name="Coulson A."/>
            <person name="Craxton M."/>
            <person name="Dear S."/>
            <person name="Du Z."/>
            <person name="Durbin R."/>
            <person name="Favello A."/>
            <person name="Fraser A."/>
            <person name="Fulton L."/>
            <person name="Gardner A."/>
            <person name="Green P."/>
            <person name="Hawkins T."/>
            <person name="Hillier L."/>
            <person name="Jier M."/>
            <person name="Johnston L."/>
            <person name="Jones M."/>
            <person name="Kershaw J."/>
            <person name="Kirsten J."/>
            <person name="Laisster N."/>
            <person name="Latreille P."/>
            <person name="Lightning J."/>
            <person name="Lloyd C."/>
            <person name="Mortimore B."/>
            <person name="O'Callaghan M."/>
            <person name="Parsons J."/>
            <person name="Percy C."/>
            <person name="Rifken L."/>
            <person name="Roopra A."/>
            <person name="Saunders D."/>
            <person name="Shownkeen R."/>
            <person name="Sims M."/>
            <person name="Smaldon N."/>
            <person name="Smith A."/>
            <person name="Smith M."/>
            <person name="Sonnhammer E."/>
            <person name="Staden R."/>
            <person name="Sulston J."/>
            <person name="Thierry-Mieg J."/>
            <person name="Thomas K."/>
            <person name="Vaudin M."/>
            <person name="Vaughan K."/>
            <person name="Waterston R."/>
            <person name="Watson A."/>
            <person name="Weinstock L."/>
            <person name="Wilkinson-Sproat J."/>
            <person name="Wohldman P."/>
        </authorList>
    </citation>
    <scope>NUCLEOTIDE SEQUENCE [LARGE SCALE GENOMIC DNA]</scope>
    <source>
        <strain>Bristol N2</strain>
    </source>
</reference>
<reference key="2">
    <citation type="journal article" date="1998" name="Science">
        <title>Genome sequence of the nematode C. elegans: a platform for investigating biology.</title>
        <authorList>
            <consortium name="The C. elegans sequencing consortium"/>
        </authorList>
    </citation>
    <scope>NUCLEOTIDE SEQUENCE [LARGE SCALE GENOMIC DNA]</scope>
    <source>
        <strain>Bristol N2</strain>
    </source>
</reference>
<feature type="signal peptide" evidence="1">
    <location>
        <begin position="1"/>
        <end position="23"/>
    </location>
</feature>
<feature type="chain" id="PRO_0000019387" description="Putative sodium/calcium exchanger 7">
    <location>
        <begin position="24"/>
        <end position="672"/>
    </location>
</feature>
<feature type="transmembrane region" description="Helical" evidence="1">
    <location>
        <begin position="88"/>
        <end position="108"/>
    </location>
</feature>
<feature type="transmembrane region" description="Helical" evidence="1">
    <location>
        <begin position="130"/>
        <end position="150"/>
    </location>
</feature>
<feature type="transmembrane region" description="Helical" evidence="1">
    <location>
        <begin position="164"/>
        <end position="184"/>
    </location>
</feature>
<feature type="transmembrane region" description="Helical" evidence="1">
    <location>
        <begin position="196"/>
        <end position="216"/>
    </location>
</feature>
<feature type="transmembrane region" description="Helical" evidence="1">
    <location>
        <begin position="221"/>
        <end position="241"/>
    </location>
</feature>
<feature type="transmembrane region" description="Helical" evidence="1">
    <location>
        <begin position="451"/>
        <end position="471"/>
    </location>
</feature>
<feature type="transmembrane region" description="Helical" evidence="1">
    <location>
        <begin position="479"/>
        <end position="499"/>
    </location>
</feature>
<feature type="transmembrane region" description="Helical" evidence="1">
    <location>
        <begin position="522"/>
        <end position="542"/>
    </location>
</feature>
<feature type="transmembrane region" description="Helical" evidence="1">
    <location>
        <begin position="551"/>
        <end position="571"/>
    </location>
</feature>
<feature type="transmembrane region" description="Helical" evidence="1">
    <location>
        <begin position="581"/>
        <end position="601"/>
    </location>
</feature>
<feature type="transmembrane region" description="Helical" evidence="1">
    <location>
        <begin position="620"/>
        <end position="640"/>
    </location>
</feature>
<feature type="transmembrane region" description="Helical" evidence="1">
    <location>
        <begin position="649"/>
        <end position="669"/>
    </location>
</feature>
<comment type="subcellular location">
    <subcellularLocation>
        <location evidence="2">Membrane</location>
        <topology evidence="2">Multi-pass membrane protein</topology>
    </subcellularLocation>
</comment>
<comment type="similarity">
    <text evidence="2">Belongs to the Ca(2+):cation antiporter (CaCA) (TC 2.A.19) family.</text>
</comment>